<accession>B1MXV9</accession>
<sequence>MKIQDFKNKKVMVFGWARSGKAAAQRLVELSAIVTVVNGGAFDTDETIYQKLLAAGVTFINHDDDQAIDKSFDFLVKNPGIPYETAIVKKALVLDIPVLTEVEVALSSFDGRLIAVTGSNGKTTTTSLIRDMLKASGQTVTTAGNIGTPVSEVVGPLTSQDTLLLELSSFQLMGLPDIKPDIALITNIFANHLDYHGDRAHYVAAKYQITKNQTANQKLILNADGADTPDFAAKTQAQVVLFSRDNSSDMAWTDGHDLIIEGEHVMPLTAIKLVGPHNLENILAAITVSKIAGVTNEAIKSVLEVFGGVPHRLQYLLTENGVRYYNDSKATDIEATQTALDSFHEPTIWLAGGLDRGDDLTRLIPNLSHVKLVIAFGETQQKVVAIARQAHKPVITVTSVKEAVPVAISSSSAGDVVLLSPAAASWDQYPNFEVRGDEFVNELKENLGV</sequence>
<proteinExistence type="inferred from homology"/>
<protein>
    <recommendedName>
        <fullName evidence="1">UDP-N-acetylmuramoylalanine--D-glutamate ligase</fullName>
        <ecNumber evidence="1">6.3.2.9</ecNumber>
    </recommendedName>
    <alternativeName>
        <fullName evidence="1">D-glutamic acid-adding enzyme</fullName>
    </alternativeName>
    <alternativeName>
        <fullName evidence="1">UDP-N-acetylmuramoyl-L-alanyl-D-glutamate synthetase</fullName>
    </alternativeName>
</protein>
<comment type="function">
    <text evidence="1">Cell wall formation. Catalyzes the addition of glutamate to the nucleotide precursor UDP-N-acetylmuramoyl-L-alanine (UMA).</text>
</comment>
<comment type="catalytic activity">
    <reaction evidence="1">
        <text>UDP-N-acetyl-alpha-D-muramoyl-L-alanine + D-glutamate + ATP = UDP-N-acetyl-alpha-D-muramoyl-L-alanyl-D-glutamate + ADP + phosphate + H(+)</text>
        <dbReference type="Rhea" id="RHEA:16429"/>
        <dbReference type="ChEBI" id="CHEBI:15378"/>
        <dbReference type="ChEBI" id="CHEBI:29986"/>
        <dbReference type="ChEBI" id="CHEBI:30616"/>
        <dbReference type="ChEBI" id="CHEBI:43474"/>
        <dbReference type="ChEBI" id="CHEBI:83898"/>
        <dbReference type="ChEBI" id="CHEBI:83900"/>
        <dbReference type="ChEBI" id="CHEBI:456216"/>
        <dbReference type="EC" id="6.3.2.9"/>
    </reaction>
</comment>
<comment type="pathway">
    <text evidence="1">Cell wall biogenesis; peptidoglycan biosynthesis.</text>
</comment>
<comment type="subcellular location">
    <subcellularLocation>
        <location evidence="1">Cytoplasm</location>
    </subcellularLocation>
</comment>
<comment type="similarity">
    <text evidence="1">Belongs to the MurCDEF family.</text>
</comment>
<feature type="chain" id="PRO_1000130863" description="UDP-N-acetylmuramoylalanine--D-glutamate ligase">
    <location>
        <begin position="1"/>
        <end position="449"/>
    </location>
</feature>
<feature type="binding site" evidence="1">
    <location>
        <begin position="118"/>
        <end position="124"/>
    </location>
    <ligand>
        <name>ATP</name>
        <dbReference type="ChEBI" id="CHEBI:30616"/>
    </ligand>
</feature>
<name>MURD_LEUCK</name>
<organism>
    <name type="scientific">Leuconostoc citreum (strain KM20)</name>
    <dbReference type="NCBI Taxonomy" id="349519"/>
    <lineage>
        <taxon>Bacteria</taxon>
        <taxon>Bacillati</taxon>
        <taxon>Bacillota</taxon>
        <taxon>Bacilli</taxon>
        <taxon>Lactobacillales</taxon>
        <taxon>Lactobacillaceae</taxon>
        <taxon>Leuconostoc</taxon>
    </lineage>
</organism>
<evidence type="ECO:0000255" key="1">
    <source>
        <dbReference type="HAMAP-Rule" id="MF_00639"/>
    </source>
</evidence>
<keyword id="KW-0067">ATP-binding</keyword>
<keyword id="KW-0131">Cell cycle</keyword>
<keyword id="KW-0132">Cell division</keyword>
<keyword id="KW-0133">Cell shape</keyword>
<keyword id="KW-0961">Cell wall biogenesis/degradation</keyword>
<keyword id="KW-0963">Cytoplasm</keyword>
<keyword id="KW-0436">Ligase</keyword>
<keyword id="KW-0547">Nucleotide-binding</keyword>
<keyword id="KW-0573">Peptidoglycan synthesis</keyword>
<keyword id="KW-1185">Reference proteome</keyword>
<gene>
    <name evidence="1" type="primary">murD</name>
    <name type="ordered locus">LCK_00528</name>
</gene>
<reference key="1">
    <citation type="journal article" date="2008" name="J. Bacteriol.">
        <title>Complete genome sequence of Leuconostoc citreum KM20.</title>
        <authorList>
            <person name="Kim J.F."/>
            <person name="Jeong H."/>
            <person name="Lee J.-S."/>
            <person name="Choi S.-H."/>
            <person name="Ha M."/>
            <person name="Hur C.-G."/>
            <person name="Kim J.-S."/>
            <person name="Lee S."/>
            <person name="Park H.-S."/>
            <person name="Park Y.-H."/>
            <person name="Oh T.K."/>
        </authorList>
    </citation>
    <scope>NUCLEOTIDE SEQUENCE [LARGE SCALE GENOMIC DNA]</scope>
    <source>
        <strain>KM20</strain>
    </source>
</reference>
<dbReference type="EC" id="6.3.2.9" evidence="1"/>
<dbReference type="EMBL" id="DQ489736">
    <property type="protein sequence ID" value="ACA82361.1"/>
    <property type="molecule type" value="Genomic_DNA"/>
</dbReference>
<dbReference type="RefSeq" id="WP_004900480.1">
    <property type="nucleotide sequence ID" value="NC_010471.1"/>
</dbReference>
<dbReference type="SMR" id="B1MXV9"/>
<dbReference type="STRING" id="349519.LCK_00528"/>
<dbReference type="KEGG" id="lci:LCK_00528"/>
<dbReference type="eggNOG" id="COG0771">
    <property type="taxonomic scope" value="Bacteria"/>
</dbReference>
<dbReference type="HOGENOM" id="CLU_032540_0_1_9"/>
<dbReference type="OrthoDB" id="9809796at2"/>
<dbReference type="UniPathway" id="UPA00219"/>
<dbReference type="Proteomes" id="UP000002166">
    <property type="component" value="Chromosome"/>
</dbReference>
<dbReference type="GO" id="GO:0005737">
    <property type="term" value="C:cytoplasm"/>
    <property type="evidence" value="ECO:0007669"/>
    <property type="project" value="UniProtKB-SubCell"/>
</dbReference>
<dbReference type="GO" id="GO:0005524">
    <property type="term" value="F:ATP binding"/>
    <property type="evidence" value="ECO:0007669"/>
    <property type="project" value="UniProtKB-UniRule"/>
</dbReference>
<dbReference type="GO" id="GO:0008764">
    <property type="term" value="F:UDP-N-acetylmuramoylalanine-D-glutamate ligase activity"/>
    <property type="evidence" value="ECO:0007669"/>
    <property type="project" value="UniProtKB-UniRule"/>
</dbReference>
<dbReference type="GO" id="GO:0051301">
    <property type="term" value="P:cell division"/>
    <property type="evidence" value="ECO:0007669"/>
    <property type="project" value="UniProtKB-KW"/>
</dbReference>
<dbReference type="GO" id="GO:0071555">
    <property type="term" value="P:cell wall organization"/>
    <property type="evidence" value="ECO:0007669"/>
    <property type="project" value="UniProtKB-KW"/>
</dbReference>
<dbReference type="GO" id="GO:0009252">
    <property type="term" value="P:peptidoglycan biosynthetic process"/>
    <property type="evidence" value="ECO:0007669"/>
    <property type="project" value="UniProtKB-UniRule"/>
</dbReference>
<dbReference type="GO" id="GO:0008360">
    <property type="term" value="P:regulation of cell shape"/>
    <property type="evidence" value="ECO:0007669"/>
    <property type="project" value="UniProtKB-KW"/>
</dbReference>
<dbReference type="Gene3D" id="3.90.190.20">
    <property type="entry name" value="Mur ligase, C-terminal domain"/>
    <property type="match status" value="1"/>
</dbReference>
<dbReference type="Gene3D" id="3.40.1190.10">
    <property type="entry name" value="Mur-like, catalytic domain"/>
    <property type="match status" value="1"/>
</dbReference>
<dbReference type="Gene3D" id="3.40.50.720">
    <property type="entry name" value="NAD(P)-binding Rossmann-like Domain"/>
    <property type="match status" value="1"/>
</dbReference>
<dbReference type="HAMAP" id="MF_00639">
    <property type="entry name" value="MurD"/>
    <property type="match status" value="1"/>
</dbReference>
<dbReference type="InterPro" id="IPR036565">
    <property type="entry name" value="Mur-like_cat_sf"/>
</dbReference>
<dbReference type="InterPro" id="IPR004101">
    <property type="entry name" value="Mur_ligase_C"/>
</dbReference>
<dbReference type="InterPro" id="IPR036615">
    <property type="entry name" value="Mur_ligase_C_dom_sf"/>
</dbReference>
<dbReference type="InterPro" id="IPR013221">
    <property type="entry name" value="Mur_ligase_cen"/>
</dbReference>
<dbReference type="InterPro" id="IPR005762">
    <property type="entry name" value="MurD"/>
</dbReference>
<dbReference type="NCBIfam" id="TIGR01087">
    <property type="entry name" value="murD"/>
    <property type="match status" value="1"/>
</dbReference>
<dbReference type="PANTHER" id="PTHR43692">
    <property type="entry name" value="UDP-N-ACETYLMURAMOYLALANINE--D-GLUTAMATE LIGASE"/>
    <property type="match status" value="1"/>
</dbReference>
<dbReference type="PANTHER" id="PTHR43692:SF1">
    <property type="entry name" value="UDP-N-ACETYLMURAMOYLALANINE--D-GLUTAMATE LIGASE"/>
    <property type="match status" value="1"/>
</dbReference>
<dbReference type="Pfam" id="PF02875">
    <property type="entry name" value="Mur_ligase_C"/>
    <property type="match status" value="1"/>
</dbReference>
<dbReference type="Pfam" id="PF08245">
    <property type="entry name" value="Mur_ligase_M"/>
    <property type="match status" value="1"/>
</dbReference>
<dbReference type="SUPFAM" id="SSF51984">
    <property type="entry name" value="MurCD N-terminal domain"/>
    <property type="match status" value="1"/>
</dbReference>
<dbReference type="SUPFAM" id="SSF53623">
    <property type="entry name" value="MurD-like peptide ligases, catalytic domain"/>
    <property type="match status" value="1"/>
</dbReference>
<dbReference type="SUPFAM" id="SSF53244">
    <property type="entry name" value="MurD-like peptide ligases, peptide-binding domain"/>
    <property type="match status" value="1"/>
</dbReference>